<feature type="chain" id="PRO_0000222111" description="Uncharacterized protein ORF29">
    <location>
        <begin position="1"/>
        <end position="253"/>
    </location>
</feature>
<feature type="region of interest" description="Disordered" evidence="1">
    <location>
        <begin position="211"/>
        <end position="241"/>
    </location>
</feature>
<organism>
    <name type="scientific">Ictalurid herpesvirus 1 (strain Auburn)</name>
    <name type="common">IcHV-1</name>
    <name type="synonym">Channel catfish herpesvirus</name>
    <dbReference type="NCBI Taxonomy" id="766178"/>
    <lineage>
        <taxon>Viruses</taxon>
        <taxon>Duplodnaviria</taxon>
        <taxon>Heunggongvirae</taxon>
        <taxon>Peploviricota</taxon>
        <taxon>Herviviricetes</taxon>
        <taxon>Herpesvirales</taxon>
        <taxon>Alloherpesviridae</taxon>
        <taxon>Ictavirus</taxon>
        <taxon>Ictavirus ictaluridallo1</taxon>
        <taxon>Ictalurid herpesvirus 1</taxon>
    </lineage>
</organism>
<sequence>MTRKIDAPWLIGWRAFVLLPVVHGSHAVIEDVNALAHRIENIHHRSQESREMQLNGDIFDGVQLTILLDGLEVGDKCLSLVPGVRGLLLHDRKKCGICTRTKPDRGLFTAYFGGLPEEDHIRSRHFQFFNDYGYLLRSMDLDAYTAPIIAPIVPGVVDCVVIYNKVHHIPIPALKPLLALNVQYEWNTVTQQLRIRTPKIRSNSYVSRDVTTRRKRYREDRDSGEDLGAESKRGNGSVRYTGRELRDSIMSRI</sequence>
<dbReference type="EMBL" id="M75136">
    <property type="protein sequence ID" value="AAA88132.1"/>
    <property type="molecule type" value="Genomic_DNA"/>
</dbReference>
<dbReference type="PIR" id="C36789">
    <property type="entry name" value="C36789"/>
</dbReference>
<dbReference type="RefSeq" id="NP_041120.1">
    <property type="nucleotide sequence ID" value="NC_001493.2"/>
</dbReference>
<dbReference type="GeneID" id="1488418"/>
<dbReference type="KEGG" id="vg:1488418"/>
<dbReference type="Proteomes" id="UP000007643">
    <property type="component" value="Segment"/>
</dbReference>
<gene>
    <name type="primary">ORF29</name>
</gene>
<protein>
    <recommendedName>
        <fullName>Uncharacterized protein ORF29</fullName>
    </recommendedName>
</protein>
<accession>Q00151</accession>
<evidence type="ECO:0000256" key="1">
    <source>
        <dbReference type="SAM" id="MobiDB-lite"/>
    </source>
</evidence>
<organismHost>
    <name type="scientific">Ictaluridae</name>
    <name type="common">bullhead catfishes</name>
    <dbReference type="NCBI Taxonomy" id="7996"/>
</organismHost>
<keyword id="KW-1185">Reference proteome</keyword>
<reference key="1">
    <citation type="journal article" date="1992" name="Virology">
        <title>Channel catfish virus: a new type of herpesvirus.</title>
        <authorList>
            <person name="Davison A.J."/>
        </authorList>
    </citation>
    <scope>NUCLEOTIDE SEQUENCE [LARGE SCALE GENOMIC DNA]</scope>
</reference>
<proteinExistence type="predicted"/>
<name>VG29_ICHVA</name>